<name>SURA_SALTY</name>
<organism>
    <name type="scientific">Salmonella typhimurium (strain LT2 / SGSC1412 / ATCC 700720)</name>
    <dbReference type="NCBI Taxonomy" id="99287"/>
    <lineage>
        <taxon>Bacteria</taxon>
        <taxon>Pseudomonadati</taxon>
        <taxon>Pseudomonadota</taxon>
        <taxon>Gammaproteobacteria</taxon>
        <taxon>Enterobacterales</taxon>
        <taxon>Enterobacteriaceae</taxon>
        <taxon>Salmonella</taxon>
    </lineage>
</organism>
<sequence>MKNWKTLLLGIAMIANTSFAAPQVVDKVAAVVNNGVVLESDVDGLMQSVKLNAGQAGQQLPDDATLRHQILERLIMDQIILQMGQKMGVKITDEQLDQAIANIAKQNNMTMDQMRSRLAYDGLNYSTYRNQIRKEMIISEVRNNEVRRRITVLPQEVDALAKQIGTQNDASTELNLSHILIALPENPTSEQVNDAQRQAESIVEEARNGADFGKLAITYSADQQALKGGQMGWGRIQELPGIFAQALSTAKKGDIVGPIRSGVGFHILKVNDLRGQSQSISVTEVHARHILLKPSPIMNDQQARLKLEEIAADIKSGKTTFAAAAKEYSQDPGSANQGGDLGWATPDIFDPAFRDALTKLHKGQISAPVHSSFGWHLIELLDTRKVDKTDAAQKDRAYRMLMNRKFSEEAATWMQEQRASAYVKILSN</sequence>
<comment type="function">
    <text evidence="1">Chaperone involved in the correct folding and assembly of outer membrane proteins. Recognizes specific patterns of aromatic residues and the orientation of their side chains, which are found more frequently in integral outer membrane proteins. May act in both early periplasmic and late outer membrane-associated steps of protein maturation.</text>
</comment>
<comment type="catalytic activity">
    <reaction evidence="1">
        <text>[protein]-peptidylproline (omega=180) = [protein]-peptidylproline (omega=0)</text>
        <dbReference type="Rhea" id="RHEA:16237"/>
        <dbReference type="Rhea" id="RHEA-COMP:10747"/>
        <dbReference type="Rhea" id="RHEA-COMP:10748"/>
        <dbReference type="ChEBI" id="CHEBI:83833"/>
        <dbReference type="ChEBI" id="CHEBI:83834"/>
        <dbReference type="EC" id="5.2.1.8"/>
    </reaction>
</comment>
<comment type="subcellular location">
    <subcellularLocation>
        <location evidence="1">Periplasm</location>
    </subcellularLocation>
    <text evidence="1">Is capable of associating with the outer membrane.</text>
</comment>
<comment type="domain">
    <text evidence="1">The PPIase activity resides only in the second parvulin domain. The N-terminal region and the C-terminal tail are necessary and sufficient for the chaperone activity of SurA. The PPIase activity is dispensable for SurA to function as a chaperone. The N-terminal region and the C-terminal tail are also required for porin recognition.</text>
</comment>
<keyword id="KW-0143">Chaperone</keyword>
<keyword id="KW-0413">Isomerase</keyword>
<keyword id="KW-0574">Periplasm</keyword>
<keyword id="KW-1185">Reference proteome</keyword>
<keyword id="KW-0677">Repeat</keyword>
<keyword id="KW-0697">Rotamase</keyword>
<keyword id="KW-0732">Signal</keyword>
<protein>
    <recommendedName>
        <fullName evidence="1">Chaperone SurA</fullName>
    </recommendedName>
    <alternativeName>
        <fullName evidence="1">Peptidyl-prolyl cis-trans isomerase SurA</fullName>
        <shortName evidence="1">PPIase SurA</shortName>
        <ecNumber evidence="1">5.2.1.8</ecNumber>
    </alternativeName>
    <alternativeName>
        <fullName evidence="1">Rotamase SurA</fullName>
    </alternativeName>
</protein>
<dbReference type="EC" id="5.2.1.8" evidence="1"/>
<dbReference type="EMBL" id="AE006468">
    <property type="protein sequence ID" value="AAL19056.1"/>
    <property type="molecule type" value="Genomic_DNA"/>
</dbReference>
<dbReference type="RefSeq" id="NP_459097.1">
    <property type="nucleotide sequence ID" value="NC_003197.2"/>
</dbReference>
<dbReference type="RefSeq" id="WP_000800482.1">
    <property type="nucleotide sequence ID" value="NC_003197.2"/>
</dbReference>
<dbReference type="SMR" id="Q7CR87"/>
<dbReference type="STRING" id="99287.STM0092"/>
<dbReference type="PaxDb" id="99287-STM0092"/>
<dbReference type="GeneID" id="1251610"/>
<dbReference type="KEGG" id="stm:STM0092"/>
<dbReference type="PATRIC" id="fig|99287.12.peg.95"/>
<dbReference type="HOGENOM" id="CLU_034646_11_0_6"/>
<dbReference type="OMA" id="HGWHIVQ"/>
<dbReference type="PhylomeDB" id="Q7CR87"/>
<dbReference type="BioCyc" id="SENT99287:STM0092-MONOMER"/>
<dbReference type="Proteomes" id="UP000001014">
    <property type="component" value="Chromosome"/>
</dbReference>
<dbReference type="GO" id="GO:0030288">
    <property type="term" value="C:outer membrane-bounded periplasmic space"/>
    <property type="evidence" value="ECO:0000318"/>
    <property type="project" value="GO_Central"/>
</dbReference>
<dbReference type="GO" id="GO:0042277">
    <property type="term" value="F:peptide binding"/>
    <property type="evidence" value="ECO:0007669"/>
    <property type="project" value="InterPro"/>
</dbReference>
<dbReference type="GO" id="GO:0003755">
    <property type="term" value="F:peptidyl-prolyl cis-trans isomerase activity"/>
    <property type="evidence" value="ECO:0000318"/>
    <property type="project" value="GO_Central"/>
</dbReference>
<dbReference type="GO" id="GO:0051082">
    <property type="term" value="F:unfolded protein binding"/>
    <property type="evidence" value="ECO:0000318"/>
    <property type="project" value="GO_Central"/>
</dbReference>
<dbReference type="GO" id="GO:0061077">
    <property type="term" value="P:chaperone-mediated protein folding"/>
    <property type="evidence" value="ECO:0000318"/>
    <property type="project" value="GO_Central"/>
</dbReference>
<dbReference type="GO" id="GO:0043165">
    <property type="term" value="P:Gram-negative-bacterium-type cell outer membrane assembly"/>
    <property type="evidence" value="ECO:0007669"/>
    <property type="project" value="InterPro"/>
</dbReference>
<dbReference type="GO" id="GO:0050821">
    <property type="term" value="P:protein stabilization"/>
    <property type="evidence" value="ECO:0007669"/>
    <property type="project" value="InterPro"/>
</dbReference>
<dbReference type="FunFam" id="1.10.4030.10:FF:000002">
    <property type="entry name" value="Chaperone SurA"/>
    <property type="match status" value="1"/>
</dbReference>
<dbReference type="FunFam" id="3.10.50.40:FF:000007">
    <property type="entry name" value="Chaperone SurA"/>
    <property type="match status" value="1"/>
</dbReference>
<dbReference type="Gene3D" id="3.10.50.40">
    <property type="match status" value="2"/>
</dbReference>
<dbReference type="Gene3D" id="1.10.4030.10">
    <property type="entry name" value="Porin chaperone SurA, peptide-binding domain"/>
    <property type="match status" value="2"/>
</dbReference>
<dbReference type="HAMAP" id="MF_01183">
    <property type="entry name" value="Chaperone_SurA"/>
    <property type="match status" value="1"/>
</dbReference>
<dbReference type="InterPro" id="IPR050280">
    <property type="entry name" value="OMP_Chaperone_SurA"/>
</dbReference>
<dbReference type="InterPro" id="IPR046357">
    <property type="entry name" value="PPIase_dom_sf"/>
</dbReference>
<dbReference type="InterPro" id="IPR000297">
    <property type="entry name" value="PPIase_PpiC"/>
</dbReference>
<dbReference type="InterPro" id="IPR023058">
    <property type="entry name" value="PPIase_PpiC_CS"/>
</dbReference>
<dbReference type="InterPro" id="IPR023034">
    <property type="entry name" value="PPIase_SurA"/>
</dbReference>
<dbReference type="InterPro" id="IPR015391">
    <property type="entry name" value="SurA_N"/>
</dbReference>
<dbReference type="InterPro" id="IPR027304">
    <property type="entry name" value="Trigger_fact/SurA_dom_sf"/>
</dbReference>
<dbReference type="NCBIfam" id="NF008038">
    <property type="entry name" value="PRK10770.1"/>
    <property type="match status" value="1"/>
</dbReference>
<dbReference type="PANTHER" id="PTHR47637">
    <property type="entry name" value="CHAPERONE SURA"/>
    <property type="match status" value="1"/>
</dbReference>
<dbReference type="PANTHER" id="PTHR47637:SF1">
    <property type="entry name" value="CHAPERONE SURA"/>
    <property type="match status" value="1"/>
</dbReference>
<dbReference type="Pfam" id="PF00639">
    <property type="entry name" value="Rotamase"/>
    <property type="match status" value="1"/>
</dbReference>
<dbReference type="Pfam" id="PF13616">
    <property type="entry name" value="Rotamase_3"/>
    <property type="match status" value="1"/>
</dbReference>
<dbReference type="Pfam" id="PF09312">
    <property type="entry name" value="SurA_N"/>
    <property type="match status" value="1"/>
</dbReference>
<dbReference type="SUPFAM" id="SSF54534">
    <property type="entry name" value="FKBP-like"/>
    <property type="match status" value="2"/>
</dbReference>
<dbReference type="SUPFAM" id="SSF109998">
    <property type="entry name" value="Triger factor/SurA peptide-binding domain-like"/>
    <property type="match status" value="1"/>
</dbReference>
<dbReference type="PROSITE" id="PS01096">
    <property type="entry name" value="PPIC_PPIASE_1"/>
    <property type="match status" value="2"/>
</dbReference>
<dbReference type="PROSITE" id="PS50198">
    <property type="entry name" value="PPIC_PPIASE_2"/>
    <property type="match status" value="2"/>
</dbReference>
<proteinExistence type="inferred from homology"/>
<accession>Q7CR87</accession>
<gene>
    <name evidence="1" type="primary">surA</name>
    <name type="ordered locus">STM0092</name>
</gene>
<reference key="1">
    <citation type="journal article" date="2001" name="Nature">
        <title>Complete genome sequence of Salmonella enterica serovar Typhimurium LT2.</title>
        <authorList>
            <person name="McClelland M."/>
            <person name="Sanderson K.E."/>
            <person name="Spieth J."/>
            <person name="Clifton S.W."/>
            <person name="Latreille P."/>
            <person name="Courtney L."/>
            <person name="Porwollik S."/>
            <person name="Ali J."/>
            <person name="Dante M."/>
            <person name="Du F."/>
            <person name="Hou S."/>
            <person name="Layman D."/>
            <person name="Leonard S."/>
            <person name="Nguyen C."/>
            <person name="Scott K."/>
            <person name="Holmes A."/>
            <person name="Grewal N."/>
            <person name="Mulvaney E."/>
            <person name="Ryan E."/>
            <person name="Sun H."/>
            <person name="Florea L."/>
            <person name="Miller W."/>
            <person name="Stoneking T."/>
            <person name="Nhan M."/>
            <person name="Waterston R."/>
            <person name="Wilson R.K."/>
        </authorList>
    </citation>
    <scope>NUCLEOTIDE SEQUENCE [LARGE SCALE GENOMIC DNA]</scope>
    <source>
        <strain>LT2 / SGSC1412 / ATCC 700720</strain>
    </source>
</reference>
<evidence type="ECO:0000255" key="1">
    <source>
        <dbReference type="HAMAP-Rule" id="MF_01183"/>
    </source>
</evidence>
<feature type="signal peptide" evidence="1">
    <location>
        <begin position="1"/>
        <end position="20"/>
    </location>
</feature>
<feature type="chain" id="PRO_0000270037" description="Chaperone SurA">
    <location>
        <begin position="21"/>
        <end position="428"/>
    </location>
</feature>
<feature type="domain" description="PpiC 1" evidence="1">
    <location>
        <begin position="171"/>
        <end position="272"/>
    </location>
</feature>
<feature type="domain" description="PpiC 2" evidence="1">
    <location>
        <begin position="282"/>
        <end position="382"/>
    </location>
</feature>